<organism>
    <name type="scientific">Thiobacillus denitrificans (strain ATCC 25259 / T1)</name>
    <dbReference type="NCBI Taxonomy" id="292415"/>
    <lineage>
        <taxon>Bacteria</taxon>
        <taxon>Pseudomonadati</taxon>
        <taxon>Pseudomonadota</taxon>
        <taxon>Betaproteobacteria</taxon>
        <taxon>Nitrosomonadales</taxon>
        <taxon>Thiobacillaceae</taxon>
        <taxon>Thiobacillus</taxon>
    </lineage>
</organism>
<name>TATA_THIDA</name>
<keyword id="KW-0997">Cell inner membrane</keyword>
<keyword id="KW-1003">Cell membrane</keyword>
<keyword id="KW-0472">Membrane</keyword>
<keyword id="KW-0653">Protein transport</keyword>
<keyword id="KW-1185">Reference proteome</keyword>
<keyword id="KW-0811">Translocation</keyword>
<keyword id="KW-0812">Transmembrane</keyword>
<keyword id="KW-1133">Transmembrane helix</keyword>
<keyword id="KW-0813">Transport</keyword>
<gene>
    <name evidence="1" type="primary">tatA</name>
    <name type="ordered locus">Tbd_1704</name>
</gene>
<evidence type="ECO:0000255" key="1">
    <source>
        <dbReference type="HAMAP-Rule" id="MF_00236"/>
    </source>
</evidence>
<evidence type="ECO:0000256" key="2">
    <source>
        <dbReference type="SAM" id="MobiDB-lite"/>
    </source>
</evidence>
<accession>Q3SI71</accession>
<sequence>MGSFSIWHWLIVLVVVLLIFGTKKLRNIGSDLGGAVKGFKEGMKDDAPKISESDKGGHTIDAEVKDKQNS</sequence>
<feature type="chain" id="PRO_1000044454" description="Sec-independent protein translocase protein TatA">
    <location>
        <begin position="1"/>
        <end position="70"/>
    </location>
</feature>
<feature type="transmembrane region" description="Helical" evidence="1">
    <location>
        <begin position="1"/>
        <end position="21"/>
    </location>
</feature>
<feature type="region of interest" description="Disordered" evidence="2">
    <location>
        <begin position="46"/>
        <end position="70"/>
    </location>
</feature>
<dbReference type="EMBL" id="CP000116">
    <property type="protein sequence ID" value="AAZ97657.1"/>
    <property type="molecule type" value="Genomic_DNA"/>
</dbReference>
<dbReference type="RefSeq" id="WP_011312216.1">
    <property type="nucleotide sequence ID" value="NC_007404.1"/>
</dbReference>
<dbReference type="SMR" id="Q3SI71"/>
<dbReference type="STRING" id="292415.Tbd_1704"/>
<dbReference type="KEGG" id="tbd:Tbd_1704"/>
<dbReference type="eggNOG" id="COG1826">
    <property type="taxonomic scope" value="Bacteria"/>
</dbReference>
<dbReference type="HOGENOM" id="CLU_086034_5_3_4"/>
<dbReference type="OrthoDB" id="7066617at2"/>
<dbReference type="Proteomes" id="UP000008291">
    <property type="component" value="Chromosome"/>
</dbReference>
<dbReference type="GO" id="GO:0033281">
    <property type="term" value="C:TAT protein transport complex"/>
    <property type="evidence" value="ECO:0007669"/>
    <property type="project" value="UniProtKB-UniRule"/>
</dbReference>
<dbReference type="GO" id="GO:0008320">
    <property type="term" value="F:protein transmembrane transporter activity"/>
    <property type="evidence" value="ECO:0007669"/>
    <property type="project" value="UniProtKB-UniRule"/>
</dbReference>
<dbReference type="GO" id="GO:0043953">
    <property type="term" value="P:protein transport by the Tat complex"/>
    <property type="evidence" value="ECO:0007669"/>
    <property type="project" value="UniProtKB-UniRule"/>
</dbReference>
<dbReference type="Gene3D" id="1.20.5.3310">
    <property type="match status" value="1"/>
</dbReference>
<dbReference type="HAMAP" id="MF_00236">
    <property type="entry name" value="TatA_E"/>
    <property type="match status" value="1"/>
</dbReference>
<dbReference type="InterPro" id="IPR003369">
    <property type="entry name" value="TatA/B/E"/>
</dbReference>
<dbReference type="InterPro" id="IPR006312">
    <property type="entry name" value="TatA/E"/>
</dbReference>
<dbReference type="NCBIfam" id="NF002813">
    <property type="entry name" value="PRK02958.1"/>
    <property type="match status" value="1"/>
</dbReference>
<dbReference type="NCBIfam" id="TIGR01411">
    <property type="entry name" value="tatAE"/>
    <property type="match status" value="1"/>
</dbReference>
<dbReference type="PANTHER" id="PTHR42982">
    <property type="entry name" value="SEC-INDEPENDENT PROTEIN TRANSLOCASE PROTEIN TATA"/>
    <property type="match status" value="1"/>
</dbReference>
<dbReference type="PANTHER" id="PTHR42982:SF1">
    <property type="entry name" value="SEC-INDEPENDENT PROTEIN TRANSLOCASE PROTEIN TATA"/>
    <property type="match status" value="1"/>
</dbReference>
<dbReference type="Pfam" id="PF02416">
    <property type="entry name" value="TatA_B_E"/>
    <property type="match status" value="1"/>
</dbReference>
<protein>
    <recommendedName>
        <fullName evidence="1">Sec-independent protein translocase protein TatA</fullName>
    </recommendedName>
</protein>
<reference key="1">
    <citation type="journal article" date="2006" name="J. Bacteriol.">
        <title>The genome sequence of the obligately chemolithoautotrophic, facultatively anaerobic bacterium Thiobacillus denitrificans.</title>
        <authorList>
            <person name="Beller H.R."/>
            <person name="Chain P.S."/>
            <person name="Letain T.E."/>
            <person name="Chakicherla A."/>
            <person name="Larimer F.W."/>
            <person name="Richardson P.M."/>
            <person name="Coleman M.A."/>
            <person name="Wood A.P."/>
            <person name="Kelly D.P."/>
        </authorList>
    </citation>
    <scope>NUCLEOTIDE SEQUENCE [LARGE SCALE GENOMIC DNA]</scope>
    <source>
        <strain>ATCC 25259 / T1</strain>
    </source>
</reference>
<comment type="function">
    <text evidence="1">Part of the twin-arginine translocation (Tat) system that transports large folded proteins containing a characteristic twin-arginine motif in their signal peptide across membranes. TatA could form the protein-conducting channel of the Tat system.</text>
</comment>
<comment type="subunit">
    <text evidence="1">The Tat system comprises two distinct complexes: a TatABC complex, containing multiple copies of TatA, TatB and TatC subunits, and a separate TatA complex, containing only TatA subunits. Substrates initially bind to the TatABC complex, which probably triggers association of the separate TatA complex to form the active translocon.</text>
</comment>
<comment type="subcellular location">
    <subcellularLocation>
        <location evidence="1">Cell inner membrane</location>
        <topology evidence="1">Single-pass membrane protein</topology>
    </subcellularLocation>
</comment>
<comment type="similarity">
    <text evidence="1">Belongs to the TatA/E family.</text>
</comment>
<proteinExistence type="inferred from homology"/>